<reference key="1">
    <citation type="journal article" date="2000" name="Nature">
        <title>Sequence and analysis of chromosome 1 of the plant Arabidopsis thaliana.</title>
        <authorList>
            <person name="Theologis A."/>
            <person name="Ecker J.R."/>
            <person name="Palm C.J."/>
            <person name="Federspiel N.A."/>
            <person name="Kaul S."/>
            <person name="White O."/>
            <person name="Alonso J."/>
            <person name="Altafi H."/>
            <person name="Araujo R."/>
            <person name="Bowman C.L."/>
            <person name="Brooks S.Y."/>
            <person name="Buehler E."/>
            <person name="Chan A."/>
            <person name="Chao Q."/>
            <person name="Chen H."/>
            <person name="Cheuk R.F."/>
            <person name="Chin C.W."/>
            <person name="Chung M.K."/>
            <person name="Conn L."/>
            <person name="Conway A.B."/>
            <person name="Conway A.R."/>
            <person name="Creasy T.H."/>
            <person name="Dewar K."/>
            <person name="Dunn P."/>
            <person name="Etgu P."/>
            <person name="Feldblyum T.V."/>
            <person name="Feng J.-D."/>
            <person name="Fong B."/>
            <person name="Fujii C.Y."/>
            <person name="Gill J.E."/>
            <person name="Goldsmith A.D."/>
            <person name="Haas B."/>
            <person name="Hansen N.F."/>
            <person name="Hughes B."/>
            <person name="Huizar L."/>
            <person name="Hunter J.L."/>
            <person name="Jenkins J."/>
            <person name="Johnson-Hopson C."/>
            <person name="Khan S."/>
            <person name="Khaykin E."/>
            <person name="Kim C.J."/>
            <person name="Koo H.L."/>
            <person name="Kremenetskaia I."/>
            <person name="Kurtz D.B."/>
            <person name="Kwan A."/>
            <person name="Lam B."/>
            <person name="Langin-Hooper S."/>
            <person name="Lee A."/>
            <person name="Lee J.M."/>
            <person name="Lenz C.A."/>
            <person name="Li J.H."/>
            <person name="Li Y.-P."/>
            <person name="Lin X."/>
            <person name="Liu S.X."/>
            <person name="Liu Z.A."/>
            <person name="Luros J.S."/>
            <person name="Maiti R."/>
            <person name="Marziali A."/>
            <person name="Militscher J."/>
            <person name="Miranda M."/>
            <person name="Nguyen M."/>
            <person name="Nierman W.C."/>
            <person name="Osborne B.I."/>
            <person name="Pai G."/>
            <person name="Peterson J."/>
            <person name="Pham P.K."/>
            <person name="Rizzo M."/>
            <person name="Rooney T."/>
            <person name="Rowley D."/>
            <person name="Sakano H."/>
            <person name="Salzberg S.L."/>
            <person name="Schwartz J.R."/>
            <person name="Shinn P."/>
            <person name="Southwick A.M."/>
            <person name="Sun H."/>
            <person name="Tallon L.J."/>
            <person name="Tambunga G."/>
            <person name="Toriumi M.J."/>
            <person name="Town C.D."/>
            <person name="Utterback T."/>
            <person name="Van Aken S."/>
            <person name="Vaysberg M."/>
            <person name="Vysotskaia V.S."/>
            <person name="Walker M."/>
            <person name="Wu D."/>
            <person name="Yu G."/>
            <person name="Fraser C.M."/>
            <person name="Venter J.C."/>
            <person name="Davis R.W."/>
        </authorList>
    </citation>
    <scope>NUCLEOTIDE SEQUENCE [LARGE SCALE GENOMIC DNA]</scope>
    <source>
        <strain>cv. Columbia</strain>
    </source>
</reference>
<reference key="2">
    <citation type="journal article" date="2017" name="Plant J.">
        <title>Araport11: a complete reannotation of the Arabidopsis thaliana reference genome.</title>
        <authorList>
            <person name="Cheng C.Y."/>
            <person name="Krishnakumar V."/>
            <person name="Chan A.P."/>
            <person name="Thibaud-Nissen F."/>
            <person name="Schobel S."/>
            <person name="Town C.D."/>
        </authorList>
    </citation>
    <scope>GENOME REANNOTATION</scope>
    <source>
        <strain>cv. Columbia</strain>
    </source>
</reference>
<reference key="3">
    <citation type="submission" date="2007-01" db="EMBL/GenBank/DDBJ databases">
        <title>Arabidopsis ORF clones.</title>
        <authorList>
            <person name="Bautista V.R."/>
            <person name="Kim C.J."/>
            <person name="Chen H."/>
            <person name="Wu S.Y."/>
            <person name="De Los Reyes C."/>
            <person name="Ecker J.R."/>
        </authorList>
    </citation>
    <scope>NUCLEOTIDE SEQUENCE [LARGE SCALE MRNA]</scope>
    <source>
        <strain>cv. Columbia</strain>
    </source>
</reference>
<reference key="4">
    <citation type="journal article" date="2002" name="Trends Plant Sci.">
        <title>The Dof family of plant transcription factors.</title>
        <authorList>
            <person name="Yanagisawa S."/>
        </authorList>
    </citation>
    <scope>GENE FAMILY</scope>
    <scope>NOMENCLATURE</scope>
</reference>
<reference key="5">
    <citation type="journal article" date="2003" name="Plant J.">
        <title>The Arabidopsis COG1 gene encodes a Dof domain transcription factor and negatively regulates phytochrome signaling.</title>
        <authorList>
            <person name="Park D.H."/>
            <person name="Lim P.O."/>
            <person name="Kim J.S."/>
            <person name="Cho D.S."/>
            <person name="Hong S.H."/>
            <person name="Nam H.G."/>
        </authorList>
    </citation>
    <scope>CHARACTERIZATION</scope>
</reference>
<reference key="6">
    <citation type="journal article" date="2009" name="Dev. Cell">
        <title>Arabidopsis DOF transcription factors act redundantly to reduce CONSTANS expression and are essential for a photoperiodic flowering response.</title>
        <authorList>
            <person name="Fornara F."/>
            <person name="Panigrahi K.C."/>
            <person name="Gissot L."/>
            <person name="Sauerbrunn N."/>
            <person name="Ruehl M."/>
            <person name="Jarillo J.A."/>
            <person name="Coupland G."/>
        </authorList>
    </citation>
    <scope>FUNCTION</scope>
    <scope>INDUCTION</scope>
</reference>
<proteinExistence type="evidence at protein level"/>
<comment type="function">
    <text evidence="4">Transcription factor that binds specifically to a 5'-AA[AG]G-3' consensus core sequence. Acts as a negative regulator in the phytochrome-mediated light responses. Controls phyB-mediated end-of-day response and the phyA-mediated anthocyanin accumulation. Not involved in direct flowering time regulation.</text>
</comment>
<comment type="interaction">
    <interactant intactId="EBI-15205840">
        <id>P68350</id>
    </interactant>
    <interactant intactId="EBI-1998580">
        <id>Q8VZI9</id>
        <label>ENAP1</label>
    </interactant>
    <organismsDiffer>false</organismsDiffer>
    <experiments>3</experiments>
</comment>
<comment type="subcellular location">
    <subcellularLocation>
        <location>Nucleus</location>
    </subcellularLocation>
</comment>
<comment type="induction">
    <text evidence="4">By red or far-red light. Circadian-regulation. The transcript level rises progressively from dawn and decreases during the night.</text>
</comment>
<gene>
    <name type="primary">DOF1.5</name>
    <name type="synonym">COG1</name>
    <name type="ordered locus">At1g29160</name>
    <name type="ORF">F28N24.35</name>
</gene>
<dbReference type="EMBL" id="AC021043">
    <property type="status" value="NOT_ANNOTATED_CDS"/>
    <property type="molecule type" value="Genomic_DNA"/>
</dbReference>
<dbReference type="EMBL" id="CP002684">
    <property type="protein sequence ID" value="AEE31051.1"/>
    <property type="molecule type" value="Genomic_DNA"/>
</dbReference>
<dbReference type="EMBL" id="BT029990">
    <property type="protein sequence ID" value="ABN04728.1"/>
    <property type="molecule type" value="mRNA"/>
</dbReference>
<dbReference type="RefSeq" id="NP_174211.1">
    <property type="nucleotide sequence ID" value="NM_102657.2"/>
</dbReference>
<dbReference type="BioGRID" id="25025">
    <property type="interactions" value="7"/>
</dbReference>
<dbReference type="FunCoup" id="P68350">
    <property type="interactions" value="751"/>
</dbReference>
<dbReference type="IntAct" id="P68350">
    <property type="interactions" value="7"/>
</dbReference>
<dbReference type="STRING" id="3702.P68350"/>
<dbReference type="PaxDb" id="3702-AT1G29160.1"/>
<dbReference type="ProteomicsDB" id="222103"/>
<dbReference type="EnsemblPlants" id="AT1G29160.1">
    <property type="protein sequence ID" value="AT1G29160.1"/>
    <property type="gene ID" value="AT1G29160"/>
</dbReference>
<dbReference type="GeneID" id="839790"/>
<dbReference type="Gramene" id="AT1G29160.1">
    <property type="protein sequence ID" value="AT1G29160.1"/>
    <property type="gene ID" value="AT1G29160"/>
</dbReference>
<dbReference type="KEGG" id="ath:AT1G29160"/>
<dbReference type="Araport" id="AT1G29160"/>
<dbReference type="TAIR" id="AT1G29160">
    <property type="gene designation" value="COG1"/>
</dbReference>
<dbReference type="eggNOG" id="ENOG502RZI1">
    <property type="taxonomic scope" value="Eukaryota"/>
</dbReference>
<dbReference type="HOGENOM" id="CLU_078374_1_0_1"/>
<dbReference type="InParanoid" id="P68350"/>
<dbReference type="OMA" id="AHEDQWH"/>
<dbReference type="OrthoDB" id="1927254at2759"/>
<dbReference type="PhylomeDB" id="P68350"/>
<dbReference type="PRO" id="PR:P68350"/>
<dbReference type="Proteomes" id="UP000006548">
    <property type="component" value="Chromosome 1"/>
</dbReference>
<dbReference type="ExpressionAtlas" id="P68350">
    <property type="expression patterns" value="baseline and differential"/>
</dbReference>
<dbReference type="GO" id="GO:0005634">
    <property type="term" value="C:nucleus"/>
    <property type="evidence" value="ECO:0007669"/>
    <property type="project" value="UniProtKB-SubCell"/>
</dbReference>
<dbReference type="GO" id="GO:0003700">
    <property type="term" value="F:DNA-binding transcription factor activity"/>
    <property type="evidence" value="ECO:0000250"/>
    <property type="project" value="TAIR"/>
</dbReference>
<dbReference type="GO" id="GO:0000976">
    <property type="term" value="F:transcription cis-regulatory region binding"/>
    <property type="evidence" value="ECO:0000353"/>
    <property type="project" value="TAIR"/>
</dbReference>
<dbReference type="GO" id="GO:0008270">
    <property type="term" value="F:zinc ion binding"/>
    <property type="evidence" value="ECO:0007669"/>
    <property type="project" value="UniProtKB-KW"/>
</dbReference>
<dbReference type="GO" id="GO:0006355">
    <property type="term" value="P:regulation of DNA-templated transcription"/>
    <property type="evidence" value="ECO:0000304"/>
    <property type="project" value="TAIR"/>
</dbReference>
<dbReference type="GO" id="GO:0010214">
    <property type="term" value="P:seed coat development"/>
    <property type="evidence" value="ECO:0000315"/>
    <property type="project" value="TAIR"/>
</dbReference>
<dbReference type="InterPro" id="IPR045174">
    <property type="entry name" value="Dof"/>
</dbReference>
<dbReference type="InterPro" id="IPR003851">
    <property type="entry name" value="Znf_Dof"/>
</dbReference>
<dbReference type="PANTHER" id="PTHR31089">
    <property type="entry name" value="CYCLIC DOF FACTOR 2"/>
    <property type="match status" value="1"/>
</dbReference>
<dbReference type="PANTHER" id="PTHR31089:SF59">
    <property type="entry name" value="DOF ZINC FINGER PROTEIN DOF1.5"/>
    <property type="match status" value="1"/>
</dbReference>
<dbReference type="Pfam" id="PF02701">
    <property type="entry name" value="Zn_ribbon_Dof"/>
    <property type="match status" value="1"/>
</dbReference>
<dbReference type="PROSITE" id="PS01361">
    <property type="entry name" value="ZF_DOF_1"/>
    <property type="match status" value="1"/>
</dbReference>
<dbReference type="PROSITE" id="PS50884">
    <property type="entry name" value="ZF_DOF_2"/>
    <property type="match status" value="1"/>
</dbReference>
<sequence length="175" mass="19423">MATQDSQGIKLFGKTITFNANITQTIKKEEQQQQQQPELQATTAVRSPSSDLTAEKRPDKIIPCPRCKSMETKFCYFNNYNVNQPRHFCKGCQRYWTAGGALRNVPVGAGRRKSKPPGRVGGFAELLGAATGAVDQVELDALLVEEWRAATASHGGFRHDFPVKRLRCYTDGQSC</sequence>
<keyword id="KW-0238">DNA-binding</keyword>
<keyword id="KW-0479">Metal-binding</keyword>
<keyword id="KW-0539">Nucleus</keyword>
<keyword id="KW-1185">Reference proteome</keyword>
<keyword id="KW-0804">Transcription</keyword>
<keyword id="KW-0805">Transcription regulation</keyword>
<keyword id="KW-0862">Zinc</keyword>
<keyword id="KW-0863">Zinc-finger</keyword>
<protein>
    <recommendedName>
        <fullName>Dof zinc finger protein DOF1.5</fullName>
        <shortName>AtDOF1.5</shortName>
    </recommendedName>
</protein>
<name>DOF15_ARATH</name>
<accession>P68350</accession>
<accession>A2RVJ9</accession>
<organism>
    <name type="scientific">Arabidopsis thaliana</name>
    <name type="common">Mouse-ear cress</name>
    <dbReference type="NCBI Taxonomy" id="3702"/>
    <lineage>
        <taxon>Eukaryota</taxon>
        <taxon>Viridiplantae</taxon>
        <taxon>Streptophyta</taxon>
        <taxon>Embryophyta</taxon>
        <taxon>Tracheophyta</taxon>
        <taxon>Spermatophyta</taxon>
        <taxon>Magnoliopsida</taxon>
        <taxon>eudicotyledons</taxon>
        <taxon>Gunneridae</taxon>
        <taxon>Pentapetalae</taxon>
        <taxon>rosids</taxon>
        <taxon>malvids</taxon>
        <taxon>Brassicales</taxon>
        <taxon>Brassicaceae</taxon>
        <taxon>Camelineae</taxon>
        <taxon>Arabidopsis</taxon>
    </lineage>
</organism>
<evidence type="ECO:0000255" key="1"/>
<evidence type="ECO:0000255" key="2">
    <source>
        <dbReference type="PROSITE-ProRule" id="PRU00071"/>
    </source>
</evidence>
<evidence type="ECO:0000256" key="3">
    <source>
        <dbReference type="SAM" id="MobiDB-lite"/>
    </source>
</evidence>
<evidence type="ECO:0000269" key="4">
    <source>
    </source>
</evidence>
<feature type="chain" id="PRO_0000074267" description="Dof zinc finger protein DOF1.5">
    <location>
        <begin position="1"/>
        <end position="175"/>
    </location>
</feature>
<feature type="zinc finger region" description="Dof-type" evidence="2">
    <location>
        <begin position="62"/>
        <end position="116"/>
    </location>
</feature>
<feature type="region of interest" description="Disordered" evidence="3">
    <location>
        <begin position="29"/>
        <end position="57"/>
    </location>
</feature>
<feature type="short sequence motif" description="Nuclear localization signal" evidence="1">
    <location>
        <begin position="162"/>
        <end position="168"/>
    </location>
</feature>
<feature type="compositionally biased region" description="Polar residues" evidence="3">
    <location>
        <begin position="37"/>
        <end position="52"/>
    </location>
</feature>
<feature type="binding site" evidence="2">
    <location>
        <position position="64"/>
    </location>
    <ligand>
        <name>Zn(2+)</name>
        <dbReference type="ChEBI" id="CHEBI:29105"/>
    </ligand>
</feature>
<feature type="binding site" evidence="2">
    <location>
        <position position="67"/>
    </location>
    <ligand>
        <name>Zn(2+)</name>
        <dbReference type="ChEBI" id="CHEBI:29105"/>
    </ligand>
</feature>
<feature type="binding site" evidence="2">
    <location>
        <position position="89"/>
    </location>
    <ligand>
        <name>Zn(2+)</name>
        <dbReference type="ChEBI" id="CHEBI:29105"/>
    </ligand>
</feature>
<feature type="binding site" evidence="2">
    <location>
        <position position="92"/>
    </location>
    <ligand>
        <name>Zn(2+)</name>
        <dbReference type="ChEBI" id="CHEBI:29105"/>
    </ligand>
</feature>